<proteinExistence type="inferred from homology"/>
<dbReference type="EMBL" id="AE000666">
    <property type="protein sequence ID" value="AAB86278.1"/>
    <property type="molecule type" value="Genomic_DNA"/>
</dbReference>
<dbReference type="PIR" id="C69109">
    <property type="entry name" value="C69109"/>
</dbReference>
<dbReference type="RefSeq" id="WP_010877414.1">
    <property type="nucleotide sequence ID" value="NC_000916.1"/>
</dbReference>
<dbReference type="STRING" id="187420.MTH_1812"/>
<dbReference type="TCDB" id="2.A.107.1.2">
    <property type="family name" value="the mntp mn(2+) exporter (mntp) family"/>
</dbReference>
<dbReference type="PaxDb" id="187420-MTH_1812"/>
<dbReference type="EnsemblBacteria" id="AAB86278">
    <property type="protein sequence ID" value="AAB86278"/>
    <property type="gene ID" value="MTH_1812"/>
</dbReference>
<dbReference type="GeneID" id="1470897"/>
<dbReference type="KEGG" id="mth:MTH_1812"/>
<dbReference type="PATRIC" id="fig|187420.15.peg.1766"/>
<dbReference type="HOGENOM" id="CLU_096410_3_0_2"/>
<dbReference type="InParanoid" id="O27840"/>
<dbReference type="Proteomes" id="UP000005223">
    <property type="component" value="Chromosome"/>
</dbReference>
<dbReference type="GO" id="GO:0005886">
    <property type="term" value="C:plasma membrane"/>
    <property type="evidence" value="ECO:0007669"/>
    <property type="project" value="UniProtKB-SubCell"/>
</dbReference>
<dbReference type="GO" id="GO:0005384">
    <property type="term" value="F:manganese ion transmembrane transporter activity"/>
    <property type="evidence" value="ECO:0007669"/>
    <property type="project" value="UniProtKB-UniRule"/>
</dbReference>
<dbReference type="HAMAP" id="MF_01521">
    <property type="entry name" value="MntP_pump"/>
    <property type="match status" value="1"/>
</dbReference>
<dbReference type="InterPro" id="IPR003810">
    <property type="entry name" value="Mntp/YtaF"/>
</dbReference>
<dbReference type="InterPro" id="IPR022929">
    <property type="entry name" value="Put_MntP"/>
</dbReference>
<dbReference type="PANTHER" id="PTHR35529">
    <property type="entry name" value="MANGANESE EFFLUX PUMP MNTP-RELATED"/>
    <property type="match status" value="1"/>
</dbReference>
<dbReference type="PANTHER" id="PTHR35529:SF1">
    <property type="entry name" value="MANGANESE EFFLUX PUMP MNTP-RELATED"/>
    <property type="match status" value="1"/>
</dbReference>
<dbReference type="Pfam" id="PF02659">
    <property type="entry name" value="Mntp"/>
    <property type="match status" value="1"/>
</dbReference>
<name>MNTP_METTH</name>
<sequence length="184" mass="19965">MDLLSMVLIGVGLAMDAFSISVSRGLALHESETNYALISALSFGTFQAAMPVLGWVSGLEIQRLVSALAPWAAFILLLIIGLKMIYESLIMEEEEFIFSYRELLVLSIATSIDAFAVGVSFALLDISIWLPVIVIGLITFILSLAGSYIGERVGHIFENRLEALGGLILILIGLKILLENVSFT</sequence>
<accession>O27840</accession>
<organism>
    <name type="scientific">Methanothermobacter thermautotrophicus (strain ATCC 29096 / DSM 1053 / JCM 10044 / NBRC 100330 / Delta H)</name>
    <name type="common">Methanobacterium thermoautotrophicum</name>
    <dbReference type="NCBI Taxonomy" id="187420"/>
    <lineage>
        <taxon>Archaea</taxon>
        <taxon>Methanobacteriati</taxon>
        <taxon>Methanobacteriota</taxon>
        <taxon>Methanomada group</taxon>
        <taxon>Methanobacteria</taxon>
        <taxon>Methanobacteriales</taxon>
        <taxon>Methanobacteriaceae</taxon>
        <taxon>Methanothermobacter</taxon>
    </lineage>
</organism>
<feature type="chain" id="PRO_0000155679" description="Putative manganese efflux pump MntP">
    <location>
        <begin position="1"/>
        <end position="184"/>
    </location>
</feature>
<feature type="transmembrane region" description="Helical" evidence="1">
    <location>
        <begin position="3"/>
        <end position="23"/>
    </location>
</feature>
<feature type="transmembrane region" description="Helical" evidence="1">
    <location>
        <begin position="36"/>
        <end position="56"/>
    </location>
</feature>
<feature type="transmembrane region" description="Helical" evidence="1">
    <location>
        <begin position="65"/>
        <end position="85"/>
    </location>
</feature>
<feature type="transmembrane region" description="Helical" evidence="1">
    <location>
        <begin position="103"/>
        <end position="123"/>
    </location>
</feature>
<feature type="transmembrane region" description="Helical" evidence="1">
    <location>
        <begin position="126"/>
        <end position="146"/>
    </location>
</feature>
<feature type="transmembrane region" description="Helical" evidence="1">
    <location>
        <begin position="163"/>
        <end position="183"/>
    </location>
</feature>
<comment type="function">
    <text evidence="1">Probably functions as a manganese efflux pump.</text>
</comment>
<comment type="subcellular location">
    <subcellularLocation>
        <location evidence="1">Cell membrane</location>
        <topology evidence="1">Multi-pass membrane protein</topology>
    </subcellularLocation>
</comment>
<comment type="similarity">
    <text evidence="1">Belongs to the MntP (TC 9.B.29) family.</text>
</comment>
<keyword id="KW-1003">Cell membrane</keyword>
<keyword id="KW-0406">Ion transport</keyword>
<keyword id="KW-0464">Manganese</keyword>
<keyword id="KW-0472">Membrane</keyword>
<keyword id="KW-1185">Reference proteome</keyword>
<keyword id="KW-0812">Transmembrane</keyword>
<keyword id="KW-1133">Transmembrane helix</keyword>
<keyword id="KW-0813">Transport</keyword>
<protein>
    <recommendedName>
        <fullName evidence="1">Putative manganese efflux pump MntP</fullName>
    </recommendedName>
</protein>
<evidence type="ECO:0000255" key="1">
    <source>
        <dbReference type="HAMAP-Rule" id="MF_01521"/>
    </source>
</evidence>
<gene>
    <name evidence="1" type="primary">mntP</name>
    <name type="ordered locus">MTH_1812</name>
</gene>
<reference key="1">
    <citation type="journal article" date="1997" name="J. Bacteriol.">
        <title>Complete genome sequence of Methanobacterium thermoautotrophicum deltaH: functional analysis and comparative genomics.</title>
        <authorList>
            <person name="Smith D.R."/>
            <person name="Doucette-Stamm L.A."/>
            <person name="Deloughery C."/>
            <person name="Lee H.-M."/>
            <person name="Dubois J."/>
            <person name="Aldredge T."/>
            <person name="Bashirzadeh R."/>
            <person name="Blakely D."/>
            <person name="Cook R."/>
            <person name="Gilbert K."/>
            <person name="Harrison D."/>
            <person name="Hoang L."/>
            <person name="Keagle P."/>
            <person name="Lumm W."/>
            <person name="Pothier B."/>
            <person name="Qiu D."/>
            <person name="Spadafora R."/>
            <person name="Vicare R."/>
            <person name="Wang Y."/>
            <person name="Wierzbowski J."/>
            <person name="Gibson R."/>
            <person name="Jiwani N."/>
            <person name="Caruso A."/>
            <person name="Bush D."/>
            <person name="Safer H."/>
            <person name="Patwell D."/>
            <person name="Prabhakar S."/>
            <person name="McDougall S."/>
            <person name="Shimer G."/>
            <person name="Goyal A."/>
            <person name="Pietrovski S."/>
            <person name="Church G.M."/>
            <person name="Daniels C.J."/>
            <person name="Mao J.-I."/>
            <person name="Rice P."/>
            <person name="Noelling J."/>
            <person name="Reeve J.N."/>
        </authorList>
    </citation>
    <scope>NUCLEOTIDE SEQUENCE [LARGE SCALE GENOMIC DNA]</scope>
    <source>
        <strain>ATCC 29096 / DSM 1053 / JCM 10044 / NBRC 100330 / Delta H</strain>
    </source>
</reference>